<feature type="chain" id="PRO_1000189065" description="D-aminopeptidase">
    <location>
        <begin position="1"/>
        <end position="518"/>
    </location>
</feature>
<feature type="region of interest" description="Important for specificity" evidence="1">
    <location>
        <begin position="477"/>
        <end position="487"/>
    </location>
</feature>
<feature type="active site" description="Nucleophile" evidence="1">
    <location>
        <position position="62"/>
    </location>
</feature>
<feature type="active site" description="Proton donor/acceptor" evidence="1">
    <location>
        <position position="65"/>
    </location>
</feature>
<feature type="binding site" evidence="1">
    <location>
        <position position="481"/>
    </location>
    <ligand>
        <name>substrate</name>
    </ligand>
</feature>
<keyword id="KW-0031">Aminopeptidase</keyword>
<keyword id="KW-0378">Hydrolase</keyword>
<keyword id="KW-0645">Protease</keyword>
<sequence>MPNIDLPTLEAFVHAIPQNYKGPGGAVAVVRNGEIVLRHAWGFADLAARKAMTPETRMPICSVSKQFTCAVLLDCIGEPEMLDSALAAYLDQFEDGRPAVRDLCNNQSGLRDYWALTVLCGAAPEGIFLPDQAQNLLRRLKTTHFAPGTHYSYCNGNFRILADLIEQHTGRSLADLLAERIFAPAAMKTAELIPDTALFNECTGYEGDTVRGFLPAINRIHWLGDAGICASLDDMIAWEQFIDRTRHDENGLYRRLSSPQTFADGAPAPYGFGLKFEETGGKRLTGHGGALRGWRCQRWHCADERISTIVMFNFEGNASDAALKMMNAALGIPPAKPVRAQANPGWFGSWLNPETGLVLSLEDAGGGRMKARFGTGPEIMDISGENEAQSSMTTLRRDGDMIHLARKDENLHLAMHRLKGEARQDIAGRYRSDELEADLLLVSEGGAIYGAFEGFLGKSDMYPLYAAGPDVWLLPVQRSMDAPSPGEWKLVFHRDAAGRITGVTVGCWLARGVEYKRL</sequence>
<accession>B2SD81</accession>
<proteinExistence type="inferred from homology"/>
<comment type="function">
    <text evidence="1">Hydrolyzes N-terminal residues in D-amino acid-containing peptides.</text>
</comment>
<comment type="catalytic activity">
    <reaction evidence="1">
        <text>Release of an N-terminal D-amino acid from a peptide, Xaa-|-Yaa-, in which Xaa is preferably D-Ala, D-Ser or D-Thr. D-amino acid amides and methyl esters also are hydrolyzed, as is glycine amide.</text>
        <dbReference type="EC" id="3.4.11.19"/>
    </reaction>
</comment>
<comment type="activity regulation">
    <text evidence="1">Inhibited by beta-lactam compounds such as 6-aminopenicillic acid, 7-aminocephalosporanic acid, benzylpenicillin and ampicillin. Inhibited by p-chloromercuribenzoate.</text>
</comment>
<comment type="subunit">
    <text evidence="1">Homodimer.</text>
</comment>
<comment type="similarity">
    <text evidence="1">Belongs to the peptidase S12 family.</text>
</comment>
<organism>
    <name type="scientific">Brucella abortus (strain S19)</name>
    <dbReference type="NCBI Taxonomy" id="430066"/>
    <lineage>
        <taxon>Bacteria</taxon>
        <taxon>Pseudomonadati</taxon>
        <taxon>Pseudomonadota</taxon>
        <taxon>Alphaproteobacteria</taxon>
        <taxon>Hyphomicrobiales</taxon>
        <taxon>Brucellaceae</taxon>
        <taxon>Brucella/Ochrobactrum group</taxon>
        <taxon>Brucella</taxon>
    </lineage>
</organism>
<reference key="1">
    <citation type="journal article" date="2008" name="PLoS ONE">
        <title>Genome sequence of Brucella abortus vaccine strain S19 compared to virulent strains yields candidate virulence genes.</title>
        <authorList>
            <person name="Crasta O.R."/>
            <person name="Folkerts O."/>
            <person name="Fei Z."/>
            <person name="Mane S.P."/>
            <person name="Evans C."/>
            <person name="Martino-Catt S."/>
            <person name="Bricker B."/>
            <person name="Yu G."/>
            <person name="Du L."/>
            <person name="Sobral B.W."/>
        </authorList>
    </citation>
    <scope>NUCLEOTIDE SEQUENCE [LARGE SCALE GENOMIC DNA]</scope>
    <source>
        <strain>S19</strain>
    </source>
</reference>
<dbReference type="EC" id="3.4.11.19" evidence="1"/>
<dbReference type="EMBL" id="CP000888">
    <property type="protein sequence ID" value="ACD73785.1"/>
    <property type="molecule type" value="Genomic_DNA"/>
</dbReference>
<dbReference type="RefSeq" id="WP_002965700.1">
    <property type="nucleotide sequence ID" value="NC_010740.1"/>
</dbReference>
<dbReference type="SMR" id="B2SD81"/>
<dbReference type="MEROPS" id="S12.002"/>
<dbReference type="KEGG" id="bmc:BAbS19_II02740"/>
<dbReference type="HOGENOM" id="CLU_020027_0_4_5"/>
<dbReference type="Proteomes" id="UP000002565">
    <property type="component" value="Chromosome 2"/>
</dbReference>
<dbReference type="GO" id="GO:0004177">
    <property type="term" value="F:aminopeptidase activity"/>
    <property type="evidence" value="ECO:0007669"/>
    <property type="project" value="UniProtKB-UniRule"/>
</dbReference>
<dbReference type="GO" id="GO:0006508">
    <property type="term" value="P:proteolysis"/>
    <property type="evidence" value="ECO:0007669"/>
    <property type="project" value="UniProtKB-KW"/>
</dbReference>
<dbReference type="Gene3D" id="2.40.128.50">
    <property type="match status" value="2"/>
</dbReference>
<dbReference type="Gene3D" id="3.40.710.10">
    <property type="entry name" value="DD-peptidase/beta-lactamase superfamily"/>
    <property type="match status" value="1"/>
</dbReference>
<dbReference type="HAMAP" id="MF_01960">
    <property type="entry name" value="D_aminopeptidase"/>
    <property type="match status" value="1"/>
</dbReference>
<dbReference type="InterPro" id="IPR050491">
    <property type="entry name" value="Bact_CellWall_Synth/Modif"/>
</dbReference>
<dbReference type="InterPro" id="IPR001466">
    <property type="entry name" value="Beta-lactam-related"/>
</dbReference>
<dbReference type="InterPro" id="IPR012338">
    <property type="entry name" value="Beta-lactam/transpept-like"/>
</dbReference>
<dbReference type="InterPro" id="IPR027279">
    <property type="entry name" value="D_amino_pept/lipop_sf"/>
</dbReference>
<dbReference type="InterPro" id="IPR023645">
    <property type="entry name" value="DAP"/>
</dbReference>
<dbReference type="InterPro" id="IPR012856">
    <property type="entry name" value="DAP_B_dom"/>
</dbReference>
<dbReference type="NCBIfam" id="NF009622">
    <property type="entry name" value="PRK13128.1"/>
    <property type="match status" value="1"/>
</dbReference>
<dbReference type="PANTHER" id="PTHR46825:SF9">
    <property type="entry name" value="BETA-LACTAMASE-RELATED DOMAIN-CONTAINING PROTEIN"/>
    <property type="match status" value="1"/>
</dbReference>
<dbReference type="PANTHER" id="PTHR46825">
    <property type="entry name" value="D-ALANYL-D-ALANINE-CARBOXYPEPTIDASE/ENDOPEPTIDASE AMPH"/>
    <property type="match status" value="1"/>
</dbReference>
<dbReference type="Pfam" id="PF00144">
    <property type="entry name" value="Beta-lactamase"/>
    <property type="match status" value="1"/>
</dbReference>
<dbReference type="Pfam" id="PF07930">
    <property type="entry name" value="DAP_B"/>
    <property type="match status" value="1"/>
</dbReference>
<dbReference type="SUPFAM" id="SSF56601">
    <property type="entry name" value="beta-lactamase/transpeptidase-like"/>
    <property type="match status" value="1"/>
</dbReference>
<dbReference type="SUPFAM" id="SSF50886">
    <property type="entry name" value="D-aminopeptidase, middle and C-terminal domains"/>
    <property type="match status" value="2"/>
</dbReference>
<protein>
    <recommendedName>
        <fullName evidence="1">D-aminopeptidase</fullName>
        <ecNumber evidence="1">3.4.11.19</ecNumber>
    </recommendedName>
</protein>
<evidence type="ECO:0000255" key="1">
    <source>
        <dbReference type="HAMAP-Rule" id="MF_01960"/>
    </source>
</evidence>
<gene>
    <name evidence="1" type="primary">dap</name>
    <name type="ordered locus">BAbS19_II02740</name>
</gene>
<name>DAP_BRUA1</name>